<gene>
    <name evidence="1" type="primary">rpmF</name>
    <name type="ordered locus">MGAS9429_Spy1826</name>
</gene>
<reference key="1">
    <citation type="journal article" date="2006" name="Proc. Natl. Acad. Sci. U.S.A.">
        <title>Molecular genetic anatomy of inter- and intraserotype variation in the human bacterial pathogen group A Streptococcus.</title>
        <authorList>
            <person name="Beres S.B."/>
            <person name="Richter E.W."/>
            <person name="Nagiec M.J."/>
            <person name="Sumby P."/>
            <person name="Porcella S.F."/>
            <person name="DeLeo F.R."/>
            <person name="Musser J.M."/>
        </authorList>
    </citation>
    <scope>NUCLEOTIDE SEQUENCE [LARGE SCALE GENOMIC DNA]</scope>
    <source>
        <strain>MGAS9429</strain>
    </source>
</reference>
<name>RL32_STRPC</name>
<organism>
    <name type="scientific">Streptococcus pyogenes serotype M12 (strain MGAS9429)</name>
    <dbReference type="NCBI Taxonomy" id="370551"/>
    <lineage>
        <taxon>Bacteria</taxon>
        <taxon>Bacillati</taxon>
        <taxon>Bacillota</taxon>
        <taxon>Bacilli</taxon>
        <taxon>Lactobacillales</taxon>
        <taxon>Streptococcaceae</taxon>
        <taxon>Streptococcus</taxon>
    </lineage>
</organism>
<feature type="chain" id="PRO_0000296575" description="Large ribosomal subunit protein bL32">
    <location>
        <begin position="1"/>
        <end position="60"/>
    </location>
</feature>
<feature type="region of interest" description="Disordered" evidence="2">
    <location>
        <begin position="1"/>
        <end position="22"/>
    </location>
</feature>
<feature type="compositionally biased region" description="Basic residues" evidence="2">
    <location>
        <begin position="7"/>
        <end position="20"/>
    </location>
</feature>
<sequence>MAVPARHTSKAKKNKRRTHYKLTAPSVQFDETTGDYSRSHRVSLKGYYKGRKIAKANEAK</sequence>
<accession>Q1JJG0</accession>
<evidence type="ECO:0000255" key="1">
    <source>
        <dbReference type="HAMAP-Rule" id="MF_00340"/>
    </source>
</evidence>
<evidence type="ECO:0000256" key="2">
    <source>
        <dbReference type="SAM" id="MobiDB-lite"/>
    </source>
</evidence>
<evidence type="ECO:0000305" key="3"/>
<comment type="similarity">
    <text evidence="1">Belongs to the bacterial ribosomal protein bL32 family.</text>
</comment>
<keyword id="KW-0687">Ribonucleoprotein</keyword>
<keyword id="KW-0689">Ribosomal protein</keyword>
<dbReference type="EMBL" id="CP000259">
    <property type="protein sequence ID" value="ABF33013.1"/>
    <property type="molecule type" value="Genomic_DNA"/>
</dbReference>
<dbReference type="RefSeq" id="WP_000290414.1">
    <property type="nucleotide sequence ID" value="NC_008021.1"/>
</dbReference>
<dbReference type="SMR" id="Q1JJG0"/>
<dbReference type="GeneID" id="83689722"/>
<dbReference type="KEGG" id="spk:MGAS9429_Spy1826"/>
<dbReference type="HOGENOM" id="CLU_129084_2_3_9"/>
<dbReference type="Proteomes" id="UP000002433">
    <property type="component" value="Chromosome"/>
</dbReference>
<dbReference type="GO" id="GO:0015934">
    <property type="term" value="C:large ribosomal subunit"/>
    <property type="evidence" value="ECO:0007669"/>
    <property type="project" value="InterPro"/>
</dbReference>
<dbReference type="GO" id="GO:0003735">
    <property type="term" value="F:structural constituent of ribosome"/>
    <property type="evidence" value="ECO:0007669"/>
    <property type="project" value="InterPro"/>
</dbReference>
<dbReference type="GO" id="GO:0006412">
    <property type="term" value="P:translation"/>
    <property type="evidence" value="ECO:0007669"/>
    <property type="project" value="UniProtKB-UniRule"/>
</dbReference>
<dbReference type="HAMAP" id="MF_00340">
    <property type="entry name" value="Ribosomal_bL32"/>
    <property type="match status" value="1"/>
</dbReference>
<dbReference type="InterPro" id="IPR002677">
    <property type="entry name" value="Ribosomal_bL32"/>
</dbReference>
<dbReference type="InterPro" id="IPR044957">
    <property type="entry name" value="Ribosomal_bL32_bact"/>
</dbReference>
<dbReference type="InterPro" id="IPR011332">
    <property type="entry name" value="Ribosomal_zn-bd"/>
</dbReference>
<dbReference type="NCBIfam" id="TIGR01031">
    <property type="entry name" value="rpmF_bact"/>
    <property type="match status" value="1"/>
</dbReference>
<dbReference type="PANTHER" id="PTHR35534">
    <property type="entry name" value="50S RIBOSOMAL PROTEIN L32"/>
    <property type="match status" value="1"/>
</dbReference>
<dbReference type="PANTHER" id="PTHR35534:SF1">
    <property type="entry name" value="LARGE RIBOSOMAL SUBUNIT PROTEIN BL32"/>
    <property type="match status" value="1"/>
</dbReference>
<dbReference type="Pfam" id="PF01783">
    <property type="entry name" value="Ribosomal_L32p"/>
    <property type="match status" value="1"/>
</dbReference>
<dbReference type="SUPFAM" id="SSF57829">
    <property type="entry name" value="Zn-binding ribosomal proteins"/>
    <property type="match status" value="1"/>
</dbReference>
<proteinExistence type="inferred from homology"/>
<protein>
    <recommendedName>
        <fullName evidence="1">Large ribosomal subunit protein bL32</fullName>
    </recommendedName>
    <alternativeName>
        <fullName evidence="3">50S ribosomal protein L32</fullName>
    </alternativeName>
</protein>